<evidence type="ECO:0000255" key="1">
    <source>
        <dbReference type="HAMAP-Rule" id="MF_00016"/>
    </source>
</evidence>
<protein>
    <recommendedName>
        <fullName evidence="1">Holliday junction branch migration complex subunit RuvB</fullName>
        <ecNumber evidence="1">3.6.4.-</ecNumber>
    </recommendedName>
</protein>
<name>RUVB_MYCUA</name>
<proteinExistence type="inferred from homology"/>
<comment type="function">
    <text evidence="1">The RuvA-RuvB-RuvC complex processes Holliday junction (HJ) DNA during genetic recombination and DNA repair, while the RuvA-RuvB complex plays an important role in the rescue of blocked DNA replication forks via replication fork reversal (RFR). RuvA specifically binds to HJ cruciform DNA, conferring on it an open structure. The RuvB hexamer acts as an ATP-dependent pump, pulling dsDNA into and through the RuvAB complex. RuvB forms 2 homohexamers on either side of HJ DNA bound by 1 or 2 RuvA tetramers; 4 subunits per hexamer contact DNA at a time. Coordinated motions by a converter formed by DNA-disengaged RuvB subunits stimulates ATP hydrolysis and nucleotide exchange. Immobilization of the converter enables RuvB to convert the ATP-contained energy into a lever motion, pulling 2 nucleotides of DNA out of the RuvA tetramer per ATP hydrolyzed, thus driving DNA branch migration. The RuvB motors rotate together with the DNA substrate, which together with the progressing nucleotide cycle form the mechanistic basis for DNA recombination by continuous HJ branch migration. Branch migration allows RuvC to scan DNA until it finds its consensus sequence, where it cleaves and resolves cruciform DNA.</text>
</comment>
<comment type="catalytic activity">
    <reaction evidence="1">
        <text>ATP + H2O = ADP + phosphate + H(+)</text>
        <dbReference type="Rhea" id="RHEA:13065"/>
        <dbReference type="ChEBI" id="CHEBI:15377"/>
        <dbReference type="ChEBI" id="CHEBI:15378"/>
        <dbReference type="ChEBI" id="CHEBI:30616"/>
        <dbReference type="ChEBI" id="CHEBI:43474"/>
        <dbReference type="ChEBI" id="CHEBI:456216"/>
    </reaction>
</comment>
<comment type="subunit">
    <text evidence="1">Homohexamer. Forms an RuvA(8)-RuvB(12)-Holliday junction (HJ) complex. HJ DNA is sandwiched between 2 RuvA tetramers; dsDNA enters through RuvA and exits via RuvB. An RuvB hexamer assembles on each DNA strand where it exits the tetramer. Each RuvB hexamer is contacted by two RuvA subunits (via domain III) on 2 adjacent RuvB subunits; this complex drives branch migration. In the full resolvosome a probable DNA-RuvA(4)-RuvB(12)-RuvC(2) complex forms which resolves the HJ.</text>
</comment>
<comment type="subcellular location">
    <subcellularLocation>
        <location evidence="1">Cytoplasm</location>
    </subcellularLocation>
</comment>
<comment type="domain">
    <text evidence="1">Has 3 domains, the large (RuvB-L) and small ATPase (RuvB-S) domains and the C-terminal head (RuvB-H) domain. The head domain binds DNA, while the ATPase domains jointly bind ATP, ADP or are empty depending on the state of the subunit in the translocation cycle. During a single DNA translocation step the structure of each domain remains the same, but their relative positions change.</text>
</comment>
<comment type="similarity">
    <text evidence="1">Belongs to the RuvB family.</text>
</comment>
<sequence>MSTDPDEREVSPALTVGDGDVDVSLRPRSLREFIGQPRVREQLQLVIQGAKNRGGTPDHILLSGPPGLGKTSLAVIIAAELGSSLRMTSGPALERAGDLAAMLSNLVEHDVLFIDEIHRIARPAEEMLYLAMEDFRVDVVVGKGPGATSIPLDVAPFTLVGATTRSGALTGPLRDRFGFTAHMDFYEPAELERVLVRSAGILGIQLGADAGAEIARRSRGTPRIANRLLRRVRDFAEVRADGVITRDVAKAALAVYDVDELGLDRLDRAVLSALTRSFSGGPVGVSTLAVAVGEEASTVEEVCEPFLVRAGMVARTPRGRVATALAWTHLGMTPPAGANQPGLFE</sequence>
<feature type="chain" id="PRO_0000322819" description="Holliday junction branch migration complex subunit RuvB">
    <location>
        <begin position="1"/>
        <end position="345"/>
    </location>
</feature>
<feature type="region of interest" description="Large ATPase domain (RuvB-L)" evidence="1">
    <location>
        <begin position="1"/>
        <end position="186"/>
    </location>
</feature>
<feature type="region of interest" description="Small ATPAse domain (RuvB-S)" evidence="1">
    <location>
        <begin position="187"/>
        <end position="257"/>
    </location>
</feature>
<feature type="region of interest" description="Head domain (RuvB-H)" evidence="1">
    <location>
        <begin position="260"/>
        <end position="345"/>
    </location>
</feature>
<feature type="binding site" evidence="1">
    <location>
        <position position="25"/>
    </location>
    <ligand>
        <name>ATP</name>
        <dbReference type="ChEBI" id="CHEBI:30616"/>
    </ligand>
</feature>
<feature type="binding site" evidence="1">
    <location>
        <position position="26"/>
    </location>
    <ligand>
        <name>ATP</name>
        <dbReference type="ChEBI" id="CHEBI:30616"/>
    </ligand>
</feature>
<feature type="binding site" evidence="1">
    <location>
        <position position="67"/>
    </location>
    <ligand>
        <name>ATP</name>
        <dbReference type="ChEBI" id="CHEBI:30616"/>
    </ligand>
</feature>
<feature type="binding site" evidence="1">
    <location>
        <position position="70"/>
    </location>
    <ligand>
        <name>ATP</name>
        <dbReference type="ChEBI" id="CHEBI:30616"/>
    </ligand>
</feature>
<feature type="binding site" evidence="1">
    <location>
        <position position="71"/>
    </location>
    <ligand>
        <name>ATP</name>
        <dbReference type="ChEBI" id="CHEBI:30616"/>
    </ligand>
</feature>
<feature type="binding site" evidence="1">
    <location>
        <position position="71"/>
    </location>
    <ligand>
        <name>Mg(2+)</name>
        <dbReference type="ChEBI" id="CHEBI:18420"/>
    </ligand>
</feature>
<feature type="binding site" evidence="1">
    <location>
        <position position="72"/>
    </location>
    <ligand>
        <name>ATP</name>
        <dbReference type="ChEBI" id="CHEBI:30616"/>
    </ligand>
</feature>
<feature type="binding site" evidence="1">
    <location>
        <begin position="133"/>
        <end position="135"/>
    </location>
    <ligand>
        <name>ATP</name>
        <dbReference type="ChEBI" id="CHEBI:30616"/>
    </ligand>
</feature>
<feature type="binding site" evidence="1">
    <location>
        <position position="176"/>
    </location>
    <ligand>
        <name>ATP</name>
        <dbReference type="ChEBI" id="CHEBI:30616"/>
    </ligand>
</feature>
<feature type="binding site" evidence="1">
    <location>
        <position position="186"/>
    </location>
    <ligand>
        <name>ATP</name>
        <dbReference type="ChEBI" id="CHEBI:30616"/>
    </ligand>
</feature>
<feature type="binding site" evidence="1">
    <location>
        <position position="223"/>
    </location>
    <ligand>
        <name>ATP</name>
        <dbReference type="ChEBI" id="CHEBI:30616"/>
    </ligand>
</feature>
<feature type="binding site" evidence="1">
    <location>
        <position position="315"/>
    </location>
    <ligand>
        <name>DNA</name>
        <dbReference type="ChEBI" id="CHEBI:16991"/>
    </ligand>
</feature>
<feature type="binding site" evidence="1">
    <location>
        <position position="320"/>
    </location>
    <ligand>
        <name>DNA</name>
        <dbReference type="ChEBI" id="CHEBI:16991"/>
    </ligand>
</feature>
<gene>
    <name evidence="1" type="primary">ruvB</name>
    <name type="ordered locus">MUL_1716</name>
</gene>
<accession>A0PPD3</accession>
<reference key="1">
    <citation type="journal article" date="2007" name="Genome Res.">
        <title>Reductive evolution and niche adaptation inferred from the genome of Mycobacterium ulcerans, the causative agent of Buruli ulcer.</title>
        <authorList>
            <person name="Stinear T.P."/>
            <person name="Seemann T."/>
            <person name="Pidot S."/>
            <person name="Frigui W."/>
            <person name="Reysset G."/>
            <person name="Garnier T."/>
            <person name="Meurice G."/>
            <person name="Simon D."/>
            <person name="Bouchier C."/>
            <person name="Ma L."/>
            <person name="Tichit M."/>
            <person name="Porter J.L."/>
            <person name="Ryan J."/>
            <person name="Johnson P.D.R."/>
            <person name="Davies J.K."/>
            <person name="Jenkin G.A."/>
            <person name="Small P.L.C."/>
            <person name="Jones L.M."/>
            <person name="Tekaia F."/>
            <person name="Laval F."/>
            <person name="Daffe M."/>
            <person name="Parkhill J."/>
            <person name="Cole S.T."/>
        </authorList>
    </citation>
    <scope>NUCLEOTIDE SEQUENCE [LARGE SCALE GENOMIC DNA]</scope>
    <source>
        <strain>Agy99</strain>
    </source>
</reference>
<organism>
    <name type="scientific">Mycobacterium ulcerans (strain Agy99)</name>
    <dbReference type="NCBI Taxonomy" id="362242"/>
    <lineage>
        <taxon>Bacteria</taxon>
        <taxon>Bacillati</taxon>
        <taxon>Actinomycetota</taxon>
        <taxon>Actinomycetes</taxon>
        <taxon>Mycobacteriales</taxon>
        <taxon>Mycobacteriaceae</taxon>
        <taxon>Mycobacterium</taxon>
        <taxon>Mycobacterium ulcerans group</taxon>
    </lineage>
</organism>
<keyword id="KW-0067">ATP-binding</keyword>
<keyword id="KW-0963">Cytoplasm</keyword>
<keyword id="KW-0227">DNA damage</keyword>
<keyword id="KW-0233">DNA recombination</keyword>
<keyword id="KW-0234">DNA repair</keyword>
<keyword id="KW-0238">DNA-binding</keyword>
<keyword id="KW-0378">Hydrolase</keyword>
<keyword id="KW-0547">Nucleotide-binding</keyword>
<dbReference type="EC" id="3.6.4.-" evidence="1"/>
<dbReference type="EMBL" id="CP000325">
    <property type="protein sequence ID" value="ABL04202.1"/>
    <property type="molecule type" value="Genomic_DNA"/>
</dbReference>
<dbReference type="RefSeq" id="WP_011739822.1">
    <property type="nucleotide sequence ID" value="NC_008611.1"/>
</dbReference>
<dbReference type="SMR" id="A0PPD3"/>
<dbReference type="KEGG" id="mul:MUL_1716"/>
<dbReference type="eggNOG" id="COG2255">
    <property type="taxonomic scope" value="Bacteria"/>
</dbReference>
<dbReference type="HOGENOM" id="CLU_055599_1_0_11"/>
<dbReference type="Proteomes" id="UP000000765">
    <property type="component" value="Chromosome"/>
</dbReference>
<dbReference type="GO" id="GO:0005737">
    <property type="term" value="C:cytoplasm"/>
    <property type="evidence" value="ECO:0007669"/>
    <property type="project" value="UniProtKB-SubCell"/>
</dbReference>
<dbReference type="GO" id="GO:0048476">
    <property type="term" value="C:Holliday junction resolvase complex"/>
    <property type="evidence" value="ECO:0007669"/>
    <property type="project" value="UniProtKB-UniRule"/>
</dbReference>
<dbReference type="GO" id="GO:0005524">
    <property type="term" value="F:ATP binding"/>
    <property type="evidence" value="ECO:0007669"/>
    <property type="project" value="UniProtKB-UniRule"/>
</dbReference>
<dbReference type="GO" id="GO:0016887">
    <property type="term" value="F:ATP hydrolysis activity"/>
    <property type="evidence" value="ECO:0007669"/>
    <property type="project" value="InterPro"/>
</dbReference>
<dbReference type="GO" id="GO:0000400">
    <property type="term" value="F:four-way junction DNA binding"/>
    <property type="evidence" value="ECO:0007669"/>
    <property type="project" value="UniProtKB-UniRule"/>
</dbReference>
<dbReference type="GO" id="GO:0009378">
    <property type="term" value="F:four-way junction helicase activity"/>
    <property type="evidence" value="ECO:0007669"/>
    <property type="project" value="InterPro"/>
</dbReference>
<dbReference type="GO" id="GO:0006310">
    <property type="term" value="P:DNA recombination"/>
    <property type="evidence" value="ECO:0007669"/>
    <property type="project" value="UniProtKB-UniRule"/>
</dbReference>
<dbReference type="GO" id="GO:0006281">
    <property type="term" value="P:DNA repair"/>
    <property type="evidence" value="ECO:0007669"/>
    <property type="project" value="UniProtKB-UniRule"/>
</dbReference>
<dbReference type="CDD" id="cd00009">
    <property type="entry name" value="AAA"/>
    <property type="match status" value="1"/>
</dbReference>
<dbReference type="Gene3D" id="1.10.8.60">
    <property type="match status" value="1"/>
</dbReference>
<dbReference type="Gene3D" id="3.40.50.300">
    <property type="entry name" value="P-loop containing nucleotide triphosphate hydrolases"/>
    <property type="match status" value="1"/>
</dbReference>
<dbReference type="Gene3D" id="1.10.10.10">
    <property type="entry name" value="Winged helix-like DNA-binding domain superfamily/Winged helix DNA-binding domain"/>
    <property type="match status" value="1"/>
</dbReference>
<dbReference type="HAMAP" id="MF_00016">
    <property type="entry name" value="DNA_HJ_migration_RuvB"/>
    <property type="match status" value="1"/>
</dbReference>
<dbReference type="InterPro" id="IPR003593">
    <property type="entry name" value="AAA+_ATPase"/>
</dbReference>
<dbReference type="InterPro" id="IPR041445">
    <property type="entry name" value="AAA_lid_4"/>
</dbReference>
<dbReference type="InterPro" id="IPR004605">
    <property type="entry name" value="DNA_helicase_Holl-junc_RuvB"/>
</dbReference>
<dbReference type="InterPro" id="IPR027417">
    <property type="entry name" value="P-loop_NTPase"/>
</dbReference>
<dbReference type="InterPro" id="IPR008824">
    <property type="entry name" value="RuvB-like_N"/>
</dbReference>
<dbReference type="InterPro" id="IPR008823">
    <property type="entry name" value="RuvB_C"/>
</dbReference>
<dbReference type="InterPro" id="IPR036388">
    <property type="entry name" value="WH-like_DNA-bd_sf"/>
</dbReference>
<dbReference type="InterPro" id="IPR036390">
    <property type="entry name" value="WH_DNA-bd_sf"/>
</dbReference>
<dbReference type="NCBIfam" id="NF000868">
    <property type="entry name" value="PRK00080.1"/>
    <property type="match status" value="1"/>
</dbReference>
<dbReference type="NCBIfam" id="TIGR00635">
    <property type="entry name" value="ruvB"/>
    <property type="match status" value="1"/>
</dbReference>
<dbReference type="PANTHER" id="PTHR42848">
    <property type="match status" value="1"/>
</dbReference>
<dbReference type="PANTHER" id="PTHR42848:SF1">
    <property type="entry name" value="HOLLIDAY JUNCTION BRANCH MIGRATION COMPLEX SUBUNIT RUVB"/>
    <property type="match status" value="1"/>
</dbReference>
<dbReference type="Pfam" id="PF17864">
    <property type="entry name" value="AAA_lid_4"/>
    <property type="match status" value="1"/>
</dbReference>
<dbReference type="Pfam" id="PF05491">
    <property type="entry name" value="RuvB_C"/>
    <property type="match status" value="1"/>
</dbReference>
<dbReference type="Pfam" id="PF05496">
    <property type="entry name" value="RuvB_N"/>
    <property type="match status" value="1"/>
</dbReference>
<dbReference type="PRINTS" id="PR00830">
    <property type="entry name" value="ENDOLAPTASE"/>
</dbReference>
<dbReference type="SMART" id="SM00382">
    <property type="entry name" value="AAA"/>
    <property type="match status" value="1"/>
</dbReference>
<dbReference type="SUPFAM" id="SSF52540">
    <property type="entry name" value="P-loop containing nucleoside triphosphate hydrolases"/>
    <property type="match status" value="1"/>
</dbReference>
<dbReference type="SUPFAM" id="SSF46785">
    <property type="entry name" value="Winged helix' DNA-binding domain"/>
    <property type="match status" value="1"/>
</dbReference>